<dbReference type="EC" id="3.1.3.11"/>
<dbReference type="EMBL" id="Z11767">
    <property type="protein sequence ID" value="CAA77814.1"/>
    <property type="molecule type" value="Genomic_DNA"/>
</dbReference>
<dbReference type="EMBL" id="L19201">
    <property type="protein sequence ID" value="AAB03057.1"/>
    <property type="molecule type" value="Genomic_DNA"/>
</dbReference>
<dbReference type="EMBL" id="U00096">
    <property type="protein sequence ID" value="AAC76907.1"/>
    <property type="molecule type" value="Genomic_DNA"/>
</dbReference>
<dbReference type="EMBL" id="AP009048">
    <property type="protein sequence ID" value="BAE77385.1"/>
    <property type="molecule type" value="Genomic_DNA"/>
</dbReference>
<dbReference type="EMBL" id="M19644">
    <property type="status" value="NOT_ANNOTATED_CDS"/>
    <property type="molecule type" value="Genomic_DNA"/>
</dbReference>
<dbReference type="PIR" id="A45248">
    <property type="entry name" value="A45248"/>
</dbReference>
<dbReference type="RefSeq" id="NP_418360.1">
    <property type="nucleotide sequence ID" value="NC_000913.3"/>
</dbReference>
<dbReference type="RefSeq" id="WP_001250644.1">
    <property type="nucleotide sequence ID" value="NZ_STEB01000017.1"/>
</dbReference>
<dbReference type="PDB" id="1NI9">
    <property type="method" value="X-ray"/>
    <property type="resolution" value="2.00 A"/>
    <property type="chains" value="A=1-336"/>
</dbReference>
<dbReference type="PDB" id="2R8T">
    <property type="method" value="X-ray"/>
    <property type="resolution" value="2.30 A"/>
    <property type="chains" value="A=1-336"/>
</dbReference>
<dbReference type="PDB" id="3BIG">
    <property type="method" value="X-ray"/>
    <property type="resolution" value="1.85 A"/>
    <property type="chains" value="A=1-336"/>
</dbReference>
<dbReference type="PDB" id="3BIH">
    <property type="method" value="X-ray"/>
    <property type="resolution" value="2.10 A"/>
    <property type="chains" value="A=1-336"/>
</dbReference>
<dbReference type="PDB" id="3D1R">
    <property type="method" value="X-ray"/>
    <property type="resolution" value="1.85 A"/>
    <property type="chains" value="A=1-336"/>
</dbReference>
<dbReference type="PDBsum" id="1NI9"/>
<dbReference type="PDBsum" id="2R8T"/>
<dbReference type="PDBsum" id="3BIG"/>
<dbReference type="PDBsum" id="3BIH"/>
<dbReference type="PDBsum" id="3D1R"/>
<dbReference type="SMR" id="P0A9C9"/>
<dbReference type="BioGRID" id="4260756">
    <property type="interactions" value="21"/>
</dbReference>
<dbReference type="BioGRID" id="852721">
    <property type="interactions" value="1"/>
</dbReference>
<dbReference type="FunCoup" id="P0A9C9">
    <property type="interactions" value="202"/>
</dbReference>
<dbReference type="IntAct" id="P0A9C9">
    <property type="interactions" value="6"/>
</dbReference>
<dbReference type="STRING" id="511145.b3925"/>
<dbReference type="jPOST" id="P0A9C9"/>
<dbReference type="PaxDb" id="511145-b3925"/>
<dbReference type="EnsemblBacteria" id="AAC76907">
    <property type="protein sequence ID" value="AAC76907"/>
    <property type="gene ID" value="b3925"/>
</dbReference>
<dbReference type="GeneID" id="93777973"/>
<dbReference type="GeneID" id="948424"/>
<dbReference type="KEGG" id="ecj:JW3896"/>
<dbReference type="KEGG" id="eco:b3925"/>
<dbReference type="KEGG" id="ecoc:C3026_21215"/>
<dbReference type="PATRIC" id="fig|1411691.4.peg.2780"/>
<dbReference type="EchoBASE" id="EB1479"/>
<dbReference type="eggNOG" id="COG1494">
    <property type="taxonomic scope" value="Bacteria"/>
</dbReference>
<dbReference type="HOGENOM" id="CLU_054938_0_0_6"/>
<dbReference type="InParanoid" id="P0A9C9"/>
<dbReference type="OMA" id="AVFYMDK"/>
<dbReference type="OrthoDB" id="9779353at2"/>
<dbReference type="PhylomeDB" id="P0A9C9"/>
<dbReference type="BioCyc" id="EcoCyc:EG11517-MONOMER"/>
<dbReference type="BioCyc" id="MetaCyc:EG11517-MONOMER"/>
<dbReference type="BRENDA" id="3.1.3.11">
    <property type="organism ID" value="2026"/>
</dbReference>
<dbReference type="SABIO-RK" id="P0A9C9"/>
<dbReference type="UniPathway" id="UPA00138"/>
<dbReference type="EvolutionaryTrace" id="P0A9C9"/>
<dbReference type="PRO" id="PR:P0A9C9"/>
<dbReference type="Proteomes" id="UP000000625">
    <property type="component" value="Chromosome"/>
</dbReference>
<dbReference type="GO" id="GO:0005737">
    <property type="term" value="C:cytoplasm"/>
    <property type="evidence" value="ECO:0007669"/>
    <property type="project" value="UniProtKB-SubCell"/>
</dbReference>
<dbReference type="GO" id="GO:0042132">
    <property type="term" value="F:fructose 1,6-bisphosphate 1-phosphatase activity"/>
    <property type="evidence" value="ECO:0000314"/>
    <property type="project" value="EcoCyc"/>
</dbReference>
<dbReference type="GO" id="GO:0030145">
    <property type="term" value="F:manganese ion binding"/>
    <property type="evidence" value="ECO:0000314"/>
    <property type="project" value="EcoCyc"/>
</dbReference>
<dbReference type="GO" id="GO:0042803">
    <property type="term" value="F:protein homodimerization activity"/>
    <property type="evidence" value="ECO:0000353"/>
    <property type="project" value="EcoCyc"/>
</dbReference>
<dbReference type="GO" id="GO:0030388">
    <property type="term" value="P:fructose 1,6-bisphosphate metabolic process"/>
    <property type="evidence" value="ECO:0000318"/>
    <property type="project" value="GO_Central"/>
</dbReference>
<dbReference type="GO" id="GO:0006094">
    <property type="term" value="P:gluconeogenesis"/>
    <property type="evidence" value="ECO:0000318"/>
    <property type="project" value="GO_Central"/>
</dbReference>
<dbReference type="GO" id="GO:0006071">
    <property type="term" value="P:glycerol metabolic process"/>
    <property type="evidence" value="ECO:0007669"/>
    <property type="project" value="InterPro"/>
</dbReference>
<dbReference type="CDD" id="cd01516">
    <property type="entry name" value="FBPase_glpX"/>
    <property type="match status" value="1"/>
</dbReference>
<dbReference type="FunFam" id="3.40.190.90:FF:000001">
    <property type="entry name" value="Fructose-1,6-bisphosphatase"/>
    <property type="match status" value="1"/>
</dbReference>
<dbReference type="Gene3D" id="3.40.190.90">
    <property type="match status" value="1"/>
</dbReference>
<dbReference type="Gene3D" id="3.30.540.10">
    <property type="entry name" value="Fructose-1,6-Bisphosphatase, subunit A, domain 1"/>
    <property type="match status" value="1"/>
</dbReference>
<dbReference type="InterPro" id="IPR004464">
    <property type="entry name" value="FBPase_class-2/SBPase"/>
</dbReference>
<dbReference type="NCBIfam" id="TIGR00330">
    <property type="entry name" value="glpX"/>
    <property type="match status" value="1"/>
</dbReference>
<dbReference type="PANTHER" id="PTHR30447:SF0">
    <property type="entry name" value="FRUCTOSE-1,6-BISPHOSPHATASE 1 CLASS 2-RELATED"/>
    <property type="match status" value="1"/>
</dbReference>
<dbReference type="PANTHER" id="PTHR30447">
    <property type="entry name" value="FRUCTOSE-1,6-BISPHOSPHATASE CLASS 2"/>
    <property type="match status" value="1"/>
</dbReference>
<dbReference type="Pfam" id="PF03320">
    <property type="entry name" value="FBPase_glpX"/>
    <property type="match status" value="1"/>
</dbReference>
<dbReference type="PIRSF" id="PIRSF004532">
    <property type="entry name" value="GlpX"/>
    <property type="match status" value="1"/>
</dbReference>
<dbReference type="SUPFAM" id="SSF56655">
    <property type="entry name" value="Carbohydrate phosphatase"/>
    <property type="match status" value="1"/>
</dbReference>
<name>GLPX_ECOLI</name>
<sequence length="336" mass="35852">MRRELAIEFSRVTESAALAGYKWLGRGDKNTADGAAVNAMRIMLNQVNIDGTIVIGEGEIDEAPMLYIGEKVGTGRGDAVDIAVDPIEGTRMTAMGQANALAVLAVGDKGCFLNAPDMYMEKLIVGPGAKGTIDLNLPLADNLRNVAAALGKPLSELTVTILAKPRHDAVIAEMQQLGVRVFAIPDGDVAASILTCMPDSEVDVLYGIGGAPEGVVSAAVIRALDGDMNGRLLARHDVKGDNEENRRIGEQELARCKAMGIEAGKVLRLGDMARSDNVIFSATGITKGDLLEGISRKGNIATTETLLIRGKSRTIRRIQSIHYLDRKDPEMQVHIL</sequence>
<organism>
    <name type="scientific">Escherichia coli (strain K12)</name>
    <dbReference type="NCBI Taxonomy" id="83333"/>
    <lineage>
        <taxon>Bacteria</taxon>
        <taxon>Pseudomonadati</taxon>
        <taxon>Pseudomonadota</taxon>
        <taxon>Gammaproteobacteria</taxon>
        <taxon>Enterobacterales</taxon>
        <taxon>Enterobacteriaceae</taxon>
        <taxon>Escherichia</taxon>
    </lineage>
</organism>
<evidence type="ECO:0000269" key="1">
    <source>
    </source>
</evidence>
<evidence type="ECO:0000269" key="2">
    <source>
    </source>
</evidence>
<evidence type="ECO:0000269" key="3">
    <source>
    </source>
</evidence>
<evidence type="ECO:0000305" key="4"/>
<evidence type="ECO:0000305" key="5">
    <source>
    </source>
</evidence>
<evidence type="ECO:0007829" key="6">
    <source>
        <dbReference type="PDB" id="1NI9"/>
    </source>
</evidence>
<evidence type="ECO:0007829" key="7">
    <source>
        <dbReference type="PDB" id="3BIG"/>
    </source>
</evidence>
<proteinExistence type="evidence at protein level"/>
<accession>P0A9C9</accession>
<accession>P11007</accession>
<accession>P28860</accession>
<accession>P28900</accession>
<accession>Q2M8M1</accession>
<reference key="1">
    <citation type="journal article" date="1992" name="J. Bacteriol.">
        <title>Molecular analysis of the glpFKX regions of Escherichia coli and Shigella flexneri.</title>
        <authorList>
            <person name="Truniger V."/>
            <person name="Boos W."/>
            <person name="Sweet G."/>
        </authorList>
    </citation>
    <scope>NUCLEOTIDE SEQUENCE [GENOMIC DNA]</scope>
    <scope>INDUCTION</scope>
    <source>
        <strain>K12 / MC4100 / ATCC 35695 / DSM 6574</strain>
    </source>
</reference>
<reference key="2">
    <citation type="journal article" date="1993" name="Nucleic Acids Res.">
        <title>Analysis of the Escherichia coli genome. III. DNA sequence of the region from 87.2 to 89.2 minutes.</title>
        <authorList>
            <person name="Plunkett G. III"/>
            <person name="Burland V."/>
            <person name="Daniels D.L."/>
            <person name="Blattner F.R."/>
        </authorList>
    </citation>
    <scope>NUCLEOTIDE SEQUENCE [LARGE SCALE GENOMIC DNA]</scope>
    <source>
        <strain>K12 / MG1655 / ATCC 47076</strain>
    </source>
</reference>
<reference key="3">
    <citation type="journal article" date="1997" name="Science">
        <title>The complete genome sequence of Escherichia coli K-12.</title>
        <authorList>
            <person name="Blattner F.R."/>
            <person name="Plunkett G. III"/>
            <person name="Bloch C.A."/>
            <person name="Perna N.T."/>
            <person name="Burland V."/>
            <person name="Riley M."/>
            <person name="Collado-Vides J."/>
            <person name="Glasner J.D."/>
            <person name="Rode C.K."/>
            <person name="Mayhew G.F."/>
            <person name="Gregor J."/>
            <person name="Davis N.W."/>
            <person name="Kirkpatrick H.A."/>
            <person name="Goeden M.A."/>
            <person name="Rose D.J."/>
            <person name="Mau B."/>
            <person name="Shao Y."/>
        </authorList>
    </citation>
    <scope>NUCLEOTIDE SEQUENCE [LARGE SCALE GENOMIC DNA]</scope>
    <source>
        <strain>K12 / MG1655 / ATCC 47076</strain>
    </source>
</reference>
<reference key="4">
    <citation type="journal article" date="2006" name="Mol. Syst. Biol.">
        <title>Highly accurate genome sequences of Escherichia coli K-12 strains MG1655 and W3110.</title>
        <authorList>
            <person name="Hayashi K."/>
            <person name="Morooka N."/>
            <person name="Yamamoto Y."/>
            <person name="Fujita K."/>
            <person name="Isono K."/>
            <person name="Choi S."/>
            <person name="Ohtsubo E."/>
            <person name="Baba T."/>
            <person name="Wanner B.L."/>
            <person name="Mori H."/>
            <person name="Horiuchi T."/>
        </authorList>
    </citation>
    <scope>NUCLEOTIDE SEQUENCE [LARGE SCALE GENOMIC DNA]</scope>
    <source>
        <strain>K12 / W3110 / ATCC 27325 / DSM 5911</strain>
    </source>
</reference>
<reference key="5">
    <citation type="journal article" date="1988" name="J. Bacteriol.">
        <title>Isolation and characterization of methyl viologen-sensitive mutants of Escherichia coli K-12.</title>
        <authorList>
            <person name="Morimyo M."/>
        </authorList>
    </citation>
    <scope>PRELIMINARY NUCLEOTIDE SEQUENCE [GENOMIC DNA] OF 228-336</scope>
    <source>
        <strain>K12</strain>
    </source>
</reference>
<reference key="6">
    <citation type="journal article" date="2000" name="J. Bacteriol.">
        <title>Purification and characterization of glpX-encoded fructose 1, 6-bisphosphatase, a new enzyme of the glycerol 3-phosphate regulon of Escherichia coli.</title>
        <authorList>
            <person name="Donahue J.L."/>
            <person name="Bownas J.L."/>
            <person name="Niehaus W.G."/>
            <person name="Larson T.J."/>
        </authorList>
    </citation>
    <scope>FUNCTION</scope>
    <scope>CATALYTIC ACTIVITY</scope>
    <scope>COFACTOR</scope>
    <scope>SUBUNIT</scope>
    <scope>KINETIC PARAMETERS</scope>
    <scope>DISRUPTION PHENOTYPE</scope>
    <source>
        <strain>K12 / MG1655 / ATCC 47076</strain>
    </source>
</reference>
<reference key="7">
    <citation type="journal article" date="2009" name="J. Biol. Chem.">
        <title>Structural and biochemical characterization of the type II fructose-1,6-bisphosphatase GlpX from Escherichia coli.</title>
        <authorList>
            <person name="Brown G."/>
            <person name="Singer A."/>
            <person name="Lunin V.V."/>
            <person name="Proudfoot M."/>
            <person name="Skarina T."/>
            <person name="Flick R."/>
            <person name="Kochinyan S."/>
            <person name="Sanishvili R."/>
            <person name="Joachimiak A."/>
            <person name="Edwards A.M."/>
            <person name="Savchenko A."/>
            <person name="Yakunin A.F."/>
        </authorList>
    </citation>
    <scope>X-RAY CRYSTALLOGRAPHY (1.85 ANGSTROMS) OF APOENZYME AND MUTANT ALA-61 IN COMPLEXES WITH SUBSTRATE; METAL IONS AND PHOSPHATE</scope>
    <scope>FUNCTION</scope>
    <scope>CATALYTIC ACTIVITY</scope>
    <scope>SUBSTRATE SPECIFICITY</scope>
    <scope>COFACTOR</scope>
    <scope>ACTIVITY REGULATION</scope>
    <scope>BIOPHYSICOCHEMICAL PROPERTIES</scope>
    <scope>SUBUNIT</scope>
    <scope>REACTION MECHANISM</scope>
    <scope>MUTAGENESIS OF LYS-29; GLU-57; GLU-59; ASP-61; ASP-85; GLU-88; THR-90; TYR-119; LYS-164; ARG-166; ASP-186; ASP-188; GLU-213; ARG-235 AND LYS-239</scope>
    <source>
        <strain>K12 / DH5-alpha</strain>
    </source>
</reference>
<protein>
    <recommendedName>
        <fullName>Fructose-1,6-bisphosphatase 1 class 2</fullName>
        <shortName>FBPase 1 class 2</shortName>
        <ecNumber>3.1.3.11</ecNumber>
    </recommendedName>
    <alternativeName>
        <fullName>D-fructose-1,6-bisphosphate 1-phosphohydrolase 1 class 2</fullName>
    </alternativeName>
</protein>
<feature type="chain" id="PRO_0000201100" description="Fructose-1,6-bisphosphatase 1 class 2">
    <location>
        <begin position="1"/>
        <end position="336"/>
    </location>
</feature>
<feature type="binding site" evidence="5">
    <location>
        <position position="33"/>
    </location>
    <ligand>
        <name>Mn(2+)</name>
        <dbReference type="ChEBI" id="CHEBI:29035"/>
        <label>1</label>
    </ligand>
</feature>
<feature type="binding site" evidence="5">
    <location>
        <position position="57"/>
    </location>
    <ligand>
        <name>Mn(2+)</name>
        <dbReference type="ChEBI" id="CHEBI:29035"/>
        <label>1</label>
    </ligand>
</feature>
<feature type="binding site" evidence="5">
    <location>
        <position position="85"/>
    </location>
    <ligand>
        <name>Mn(2+)</name>
        <dbReference type="ChEBI" id="CHEBI:29035"/>
        <label>2</label>
    </ligand>
</feature>
<feature type="binding site" evidence="3">
    <location>
        <begin position="88"/>
        <end position="90"/>
    </location>
    <ligand>
        <name>substrate</name>
    </ligand>
</feature>
<feature type="binding site" evidence="5">
    <location>
        <position position="88"/>
    </location>
    <ligand>
        <name>Mn(2+)</name>
        <dbReference type="ChEBI" id="CHEBI:29035"/>
        <label>2</label>
    </ligand>
</feature>
<feature type="binding site" evidence="3">
    <location>
        <position position="119"/>
    </location>
    <ligand>
        <name>substrate</name>
    </ligand>
</feature>
<feature type="binding site" evidence="3">
    <location>
        <begin position="164"/>
        <end position="166"/>
    </location>
    <ligand>
        <name>substrate</name>
    </ligand>
</feature>
<feature type="binding site" evidence="3">
    <location>
        <begin position="186"/>
        <end position="188"/>
    </location>
    <ligand>
        <name>substrate</name>
    </ligand>
</feature>
<feature type="binding site" evidence="3">
    <location>
        <position position="210"/>
    </location>
    <ligand>
        <name>substrate</name>
    </ligand>
</feature>
<feature type="binding site" evidence="5">
    <location>
        <position position="213"/>
    </location>
    <ligand>
        <name>Mn(2+)</name>
        <dbReference type="ChEBI" id="CHEBI:29035"/>
        <label>2</label>
    </ligand>
</feature>
<feature type="mutagenesis site" description="2.4-fold increase in FBPase activity, and no effect on substrate affinity." evidence="3">
    <original>K</original>
    <variation>A</variation>
    <location>
        <position position="29"/>
    </location>
</feature>
<feature type="mutagenesis site" description="Strong decrease in FBPase activity." evidence="3">
    <original>E</original>
    <variation>A</variation>
    <location>
        <position position="57"/>
    </location>
</feature>
<feature type="mutagenesis site" description="5.5-fold decrease in FBPase activity, and 1.4-fold decrease in substrate affinity." evidence="3">
    <original>E</original>
    <variation>A</variation>
    <location>
        <position position="59"/>
    </location>
</feature>
<feature type="mutagenesis site" description="Great decrease in FBPase activity." evidence="3">
    <original>D</original>
    <variation>A</variation>
    <location>
        <position position="61"/>
    </location>
</feature>
<feature type="mutagenesis site" description="Great decrease in FBPase activity." evidence="3">
    <original>D</original>
    <variation>A</variation>
    <location>
        <position position="85"/>
    </location>
</feature>
<feature type="mutagenesis site" description="Strong decrease in FBPase activity." evidence="3">
    <original>E</original>
    <variation>A</variation>
    <location>
        <position position="88"/>
    </location>
</feature>
<feature type="mutagenesis site" description="Strong decrease in FBPase activity." evidence="3">
    <original>T</original>
    <variation>A</variation>
    <location>
        <position position="90"/>
    </location>
</feature>
<feature type="mutagenesis site" description="Strong decrease in FBPase activity." evidence="3">
    <original>Y</original>
    <variation>A</variation>
    <location>
        <position position="119"/>
    </location>
</feature>
<feature type="mutagenesis site" description="Strong decrease in FBPase activity." evidence="3">
    <original>K</original>
    <variation>A</variation>
    <location>
        <position position="164"/>
    </location>
</feature>
<feature type="mutagenesis site" description="Strong decrease in FBPase activity." evidence="3">
    <original>R</original>
    <variation>A</variation>
    <location>
        <position position="166"/>
    </location>
</feature>
<feature type="mutagenesis site" description="5-fold decrease in FBPase activity, and 3-fold decrease in substrate affinity." evidence="3">
    <original>D</original>
    <variation>A</variation>
    <location>
        <position position="186"/>
    </location>
</feature>
<feature type="mutagenesis site" description="Great decrease in FBPase activity." evidence="3">
    <original>D</original>
    <variation>A</variation>
    <location>
        <position position="188"/>
    </location>
</feature>
<feature type="mutagenesis site" description="Great decrease in FBPase activity." evidence="3">
    <original>E</original>
    <variation>A</variation>
    <location>
        <position position="213"/>
    </location>
</feature>
<feature type="mutagenesis site" description="Nearly no effect on FBPase activity, and 3-fold decrease in substrate affinity." evidence="3">
    <original>R</original>
    <variation>A</variation>
    <location>
        <position position="235"/>
    </location>
</feature>
<feature type="mutagenesis site" description="1.3-fold increase in FBPase activity, and 1.4-fold decrease in substrate affinity." evidence="3">
    <original>K</original>
    <variation>A</variation>
    <location>
        <position position="239"/>
    </location>
</feature>
<feature type="helix" evidence="7">
    <location>
        <begin position="3"/>
        <end position="5"/>
    </location>
</feature>
<feature type="helix" evidence="7">
    <location>
        <begin position="6"/>
        <end position="21"/>
    </location>
</feature>
<feature type="turn" evidence="7">
    <location>
        <begin position="22"/>
        <end position="25"/>
    </location>
</feature>
<feature type="helix" evidence="7">
    <location>
        <begin position="29"/>
        <end position="44"/>
    </location>
</feature>
<feature type="strand" evidence="7">
    <location>
        <begin position="50"/>
        <end position="58"/>
    </location>
</feature>
<feature type="turn" evidence="7">
    <location>
        <begin position="60"/>
        <end position="62"/>
    </location>
</feature>
<feature type="strand" evidence="7">
    <location>
        <begin position="64"/>
        <end position="67"/>
    </location>
</feature>
<feature type="strand" evidence="7">
    <location>
        <begin position="71"/>
        <end position="73"/>
    </location>
</feature>
<feature type="strand" evidence="7">
    <location>
        <begin position="79"/>
        <end position="88"/>
    </location>
</feature>
<feature type="helix" evidence="7">
    <location>
        <begin position="90"/>
        <end position="94"/>
    </location>
</feature>
<feature type="strand" evidence="7">
    <location>
        <begin position="101"/>
        <end position="108"/>
    </location>
</feature>
<feature type="strand" evidence="7">
    <location>
        <begin position="117"/>
        <end position="125"/>
    </location>
</feature>
<feature type="helix" evidence="7">
    <location>
        <begin position="127"/>
        <end position="129"/>
    </location>
</feature>
<feature type="helix" evidence="7">
    <location>
        <begin position="139"/>
        <end position="150"/>
    </location>
</feature>
<feature type="helix" evidence="7">
    <location>
        <begin position="154"/>
        <end position="156"/>
    </location>
</feature>
<feature type="strand" evidence="7">
    <location>
        <begin position="158"/>
        <end position="162"/>
    </location>
</feature>
<feature type="helix" evidence="7">
    <location>
        <begin position="165"/>
        <end position="167"/>
    </location>
</feature>
<feature type="helix" evidence="7">
    <location>
        <begin position="168"/>
        <end position="177"/>
    </location>
</feature>
<feature type="strand" evidence="7">
    <location>
        <begin position="180"/>
        <end position="186"/>
    </location>
</feature>
<feature type="helix" evidence="7">
    <location>
        <begin position="189"/>
        <end position="194"/>
    </location>
</feature>
<feature type="strand" evidence="7">
    <location>
        <begin position="204"/>
        <end position="210"/>
    </location>
</feature>
<feature type="helix" evidence="7">
    <location>
        <begin position="211"/>
        <end position="224"/>
    </location>
</feature>
<feature type="strand" evidence="7">
    <location>
        <begin position="227"/>
        <end position="233"/>
    </location>
</feature>
<feature type="helix" evidence="7">
    <location>
        <begin position="235"/>
        <end position="237"/>
    </location>
</feature>
<feature type="helix" evidence="7">
    <location>
        <begin position="244"/>
        <end position="257"/>
    </location>
</feature>
<feature type="turn" evidence="7">
    <location>
        <begin position="258"/>
        <end position="260"/>
    </location>
</feature>
<feature type="strand" evidence="7">
    <location>
        <begin position="265"/>
        <end position="268"/>
    </location>
</feature>
<feature type="helix" evidence="7">
    <location>
        <begin position="269"/>
        <end position="272"/>
    </location>
</feature>
<feature type="strand" evidence="7">
    <location>
        <begin position="278"/>
        <end position="286"/>
    </location>
</feature>
<feature type="strand" evidence="7">
    <location>
        <begin position="289"/>
        <end position="291"/>
    </location>
</feature>
<feature type="strand" evidence="7">
    <location>
        <begin position="295"/>
        <end position="297"/>
    </location>
</feature>
<feature type="strand" evidence="7">
    <location>
        <begin position="300"/>
        <end position="309"/>
    </location>
</feature>
<feature type="turn" evidence="6">
    <location>
        <begin position="310"/>
        <end position="313"/>
    </location>
</feature>
<feature type="strand" evidence="7">
    <location>
        <begin position="315"/>
        <end position="323"/>
    </location>
</feature>
<keyword id="KW-0002">3D-structure</keyword>
<keyword id="KW-0119">Carbohydrate metabolism</keyword>
<keyword id="KW-0963">Cytoplasm</keyword>
<keyword id="KW-0378">Hydrolase</keyword>
<keyword id="KW-0464">Manganese</keyword>
<keyword id="KW-0479">Metal-binding</keyword>
<keyword id="KW-1185">Reference proteome</keyword>
<gene>
    <name type="primary">glpX</name>
    <name type="ordered locus">b3925</name>
    <name type="ordered locus">JW3896</name>
</gene>
<comment type="function">
    <text evidence="1 3">Catalyzes the hydrolysis of fructose 1,6-bisphosphate to fructose 6-phosphate. Is likely to be involved in gluconeogenesis during growth on glycerol. Also displays a low activity toward glucose 1,6-bisphosphate, and no activity against ribulose 1,5-bisphosphate, fructose 2,6-bisphosphate, or fructose 1-phosphate.</text>
</comment>
<comment type="catalytic activity">
    <reaction evidence="1 3">
        <text>beta-D-fructose 1,6-bisphosphate + H2O = beta-D-fructose 6-phosphate + phosphate</text>
        <dbReference type="Rhea" id="RHEA:11064"/>
        <dbReference type="ChEBI" id="CHEBI:15377"/>
        <dbReference type="ChEBI" id="CHEBI:32966"/>
        <dbReference type="ChEBI" id="CHEBI:43474"/>
        <dbReference type="ChEBI" id="CHEBI:57634"/>
        <dbReference type="EC" id="3.1.3.11"/>
    </reaction>
</comment>
<comment type="cofactor">
    <cofactor evidence="1 3">
        <name>Mn(2+)</name>
        <dbReference type="ChEBI" id="CHEBI:29035"/>
    </cofactor>
    <text evidence="1 3">Manganese. Mg(2+), Co(2+), Ni(2+), Ca(2+), Cu(2+) and Zn(2+) cannot support activity.</text>
</comment>
<comment type="activity regulation">
    <text evidence="3">Competitively inhibited by low concentrations of phosphate (IC50 3.0 mM) and is also sensitive to Li(+) (IC50 70 mM). Slightly activated by KCl.</text>
</comment>
<comment type="biophysicochemical properties">
    <kinetics>
        <KM evidence="1 3">35 uM for fructose 1,6-bisphosphate (at pH 7.7 and room temperature)</KM>
        <KM evidence="1 3">70 uM for fructose 1,6-bisphosphate (at pH 9.0 and 37 degrees Celsius)</KM>
        <KM evidence="1 3">0.6 mM for Mn(2+) (at pH 9.0 and 37 degrees Celsius)</KM>
        <Vmax evidence="1 3">3.3 umol/min/mg enzyme (at pH 7.7 and room temperature)</Vmax>
        <Vmax evidence="1 3">8.8 umol/min/mg enzyme (at pH 9.0 and 37 degrees Celsius)</Vmax>
        <text>The catalytic efficiency of GlpX is 3-fold higher than that of YggF, the other FBPase class 2 in E.coli.</text>
    </kinetics>
    <phDependence>
        <text evidence="3">Optimum pH is 7.5-8.</text>
    </phDependence>
</comment>
<comment type="pathway">
    <text>Carbohydrate biosynthesis; gluconeogenesis.</text>
</comment>
<comment type="subunit">
    <text evidence="1 3">Homodimer.</text>
</comment>
<comment type="subcellular location">
    <subcellularLocation>
        <location>Cytoplasm</location>
    </subcellularLocation>
</comment>
<comment type="induction">
    <text evidence="2">By glycerol and sn-glycerol-3-phosphate.</text>
</comment>
<comment type="disruption phenotype">
    <text evidence="1">Cells lacking this gene grow normally on gluconeogenic substrates (succinate or glycerol).</text>
</comment>
<comment type="miscellaneous">
    <text>E.coli K12 also possesses a FBPase class 1 (Fbp), which is the primary FBPase in E.coli and probably represents the main gluconeogenic FBPase.</text>
</comment>
<comment type="similarity">
    <text evidence="4">Belongs to the FBPase class 2 family.</text>
</comment>
<comment type="sequence caution" evidence="4">
    <conflict type="miscellaneous discrepancy">
        <sequence resource="EMBL" id="M19644"/>
    </conflict>
    <text>The C-terminal part of glpX was incorrectly assigned as being part of mvrA.</text>
</comment>